<feature type="chain" id="PRO_0000390227" description="NADH-quinone oxidoreductase subunit K">
    <location>
        <begin position="1"/>
        <end position="100"/>
    </location>
</feature>
<feature type="transmembrane region" description="Helical" evidence="1">
    <location>
        <begin position="4"/>
        <end position="24"/>
    </location>
</feature>
<feature type="transmembrane region" description="Helical" evidence="1">
    <location>
        <begin position="28"/>
        <end position="48"/>
    </location>
</feature>
<feature type="transmembrane region" description="Helical" evidence="1">
    <location>
        <begin position="60"/>
        <end position="80"/>
    </location>
</feature>
<proteinExistence type="inferred from homology"/>
<dbReference type="EC" id="7.1.1.-" evidence="1"/>
<dbReference type="EMBL" id="FM200053">
    <property type="protein sequence ID" value="CAR58638.1"/>
    <property type="molecule type" value="Genomic_DNA"/>
</dbReference>
<dbReference type="RefSeq" id="WP_000612687.1">
    <property type="nucleotide sequence ID" value="NC_011147.1"/>
</dbReference>
<dbReference type="SMR" id="B5BCM7"/>
<dbReference type="KEGG" id="sek:SSPA0509"/>
<dbReference type="HOGENOM" id="CLU_144724_0_1_6"/>
<dbReference type="Proteomes" id="UP000001869">
    <property type="component" value="Chromosome"/>
</dbReference>
<dbReference type="GO" id="GO:0030964">
    <property type="term" value="C:NADH dehydrogenase complex"/>
    <property type="evidence" value="ECO:0007669"/>
    <property type="project" value="TreeGrafter"/>
</dbReference>
<dbReference type="GO" id="GO:0005886">
    <property type="term" value="C:plasma membrane"/>
    <property type="evidence" value="ECO:0007669"/>
    <property type="project" value="UniProtKB-SubCell"/>
</dbReference>
<dbReference type="GO" id="GO:0050136">
    <property type="term" value="F:NADH:ubiquinone reductase (non-electrogenic) activity"/>
    <property type="evidence" value="ECO:0007669"/>
    <property type="project" value="UniProtKB-UniRule"/>
</dbReference>
<dbReference type="GO" id="GO:0048038">
    <property type="term" value="F:quinone binding"/>
    <property type="evidence" value="ECO:0007669"/>
    <property type="project" value="UniProtKB-KW"/>
</dbReference>
<dbReference type="GO" id="GO:0042773">
    <property type="term" value="P:ATP synthesis coupled electron transport"/>
    <property type="evidence" value="ECO:0007669"/>
    <property type="project" value="InterPro"/>
</dbReference>
<dbReference type="FunFam" id="1.10.287.3510:FF:000001">
    <property type="entry name" value="NADH-quinone oxidoreductase subunit K"/>
    <property type="match status" value="1"/>
</dbReference>
<dbReference type="Gene3D" id="1.10.287.3510">
    <property type="match status" value="1"/>
</dbReference>
<dbReference type="HAMAP" id="MF_01456">
    <property type="entry name" value="NDH1_NuoK"/>
    <property type="match status" value="1"/>
</dbReference>
<dbReference type="InterPro" id="IPR001133">
    <property type="entry name" value="NADH_UbQ_OxRdtase_chain4L/K"/>
</dbReference>
<dbReference type="InterPro" id="IPR039428">
    <property type="entry name" value="NUOK/Mnh_C1-like"/>
</dbReference>
<dbReference type="NCBIfam" id="NF004319">
    <property type="entry name" value="PRK05715.1-1"/>
    <property type="match status" value="1"/>
</dbReference>
<dbReference type="NCBIfam" id="NF004320">
    <property type="entry name" value="PRK05715.1-2"/>
    <property type="match status" value="1"/>
</dbReference>
<dbReference type="PANTHER" id="PTHR11434:SF16">
    <property type="entry name" value="NADH-UBIQUINONE OXIDOREDUCTASE CHAIN 4L"/>
    <property type="match status" value="1"/>
</dbReference>
<dbReference type="PANTHER" id="PTHR11434">
    <property type="entry name" value="NADH-UBIQUINONE OXIDOREDUCTASE SUBUNIT ND4L"/>
    <property type="match status" value="1"/>
</dbReference>
<dbReference type="Pfam" id="PF00420">
    <property type="entry name" value="Oxidored_q2"/>
    <property type="match status" value="1"/>
</dbReference>
<accession>B5BCM7</accession>
<organism>
    <name type="scientific">Salmonella paratyphi A (strain AKU_12601)</name>
    <dbReference type="NCBI Taxonomy" id="554290"/>
    <lineage>
        <taxon>Bacteria</taxon>
        <taxon>Pseudomonadati</taxon>
        <taxon>Pseudomonadota</taxon>
        <taxon>Gammaproteobacteria</taxon>
        <taxon>Enterobacterales</taxon>
        <taxon>Enterobacteriaceae</taxon>
        <taxon>Salmonella</taxon>
    </lineage>
</organism>
<evidence type="ECO:0000255" key="1">
    <source>
        <dbReference type="HAMAP-Rule" id="MF_01456"/>
    </source>
</evidence>
<sequence length="100" mass="10818">MIPLTHGLILAAILFVLGLTGLVIRRNLLFMLIGLEIMINASALAFVVAGSYWGQTDGQVMYILAISLAAAEASIGLALLLQLHRRRQNLNIDSVSEMRG</sequence>
<comment type="function">
    <text evidence="1">NDH-1 shuttles electrons from NADH, via FMN and iron-sulfur (Fe-S) centers, to quinones in the respiratory chain. The immediate electron acceptor for the enzyme in this species is believed to be ubiquinone. Couples the redox reaction to proton translocation (for every two electrons transferred, four hydrogen ions are translocated across the cytoplasmic membrane), and thus conserves the redox energy in a proton gradient.</text>
</comment>
<comment type="catalytic activity">
    <reaction evidence="1">
        <text>a quinone + NADH + 5 H(+)(in) = a quinol + NAD(+) + 4 H(+)(out)</text>
        <dbReference type="Rhea" id="RHEA:57888"/>
        <dbReference type="ChEBI" id="CHEBI:15378"/>
        <dbReference type="ChEBI" id="CHEBI:24646"/>
        <dbReference type="ChEBI" id="CHEBI:57540"/>
        <dbReference type="ChEBI" id="CHEBI:57945"/>
        <dbReference type="ChEBI" id="CHEBI:132124"/>
    </reaction>
</comment>
<comment type="subunit">
    <text evidence="1">NDH-1 is composed of 13 different subunits. Subunits NuoA, H, J, K, L, M, N constitute the membrane sector of the complex.</text>
</comment>
<comment type="subcellular location">
    <subcellularLocation>
        <location evidence="1">Cell inner membrane</location>
        <topology evidence="1">Multi-pass membrane protein</topology>
    </subcellularLocation>
</comment>
<comment type="similarity">
    <text evidence="1">Belongs to the complex I subunit 4L family.</text>
</comment>
<protein>
    <recommendedName>
        <fullName evidence="1">NADH-quinone oxidoreductase subunit K</fullName>
        <ecNumber evidence="1">7.1.1.-</ecNumber>
    </recommendedName>
    <alternativeName>
        <fullName evidence="1">NADH dehydrogenase I subunit K</fullName>
    </alternativeName>
    <alternativeName>
        <fullName evidence="1">NDH-1 subunit K</fullName>
    </alternativeName>
</protein>
<keyword id="KW-0997">Cell inner membrane</keyword>
<keyword id="KW-1003">Cell membrane</keyword>
<keyword id="KW-0472">Membrane</keyword>
<keyword id="KW-0520">NAD</keyword>
<keyword id="KW-0874">Quinone</keyword>
<keyword id="KW-1278">Translocase</keyword>
<keyword id="KW-0812">Transmembrane</keyword>
<keyword id="KW-1133">Transmembrane helix</keyword>
<keyword id="KW-0813">Transport</keyword>
<keyword id="KW-0830">Ubiquinone</keyword>
<gene>
    <name evidence="1" type="primary">nuoK</name>
    <name type="ordered locus">SSPA0509</name>
</gene>
<name>NUOK_SALPK</name>
<reference key="1">
    <citation type="journal article" date="2009" name="BMC Genomics">
        <title>Pseudogene accumulation in the evolutionary histories of Salmonella enterica serovars Paratyphi A and Typhi.</title>
        <authorList>
            <person name="Holt K.E."/>
            <person name="Thomson N.R."/>
            <person name="Wain J."/>
            <person name="Langridge G.C."/>
            <person name="Hasan R."/>
            <person name="Bhutta Z.A."/>
            <person name="Quail M.A."/>
            <person name="Norbertczak H."/>
            <person name="Walker D."/>
            <person name="Simmonds M."/>
            <person name="White B."/>
            <person name="Bason N."/>
            <person name="Mungall K."/>
            <person name="Dougan G."/>
            <person name="Parkhill J."/>
        </authorList>
    </citation>
    <scope>NUCLEOTIDE SEQUENCE [LARGE SCALE GENOMIC DNA]</scope>
    <source>
        <strain>AKU_12601</strain>
    </source>
</reference>